<organism>
    <name type="scientific">Shigella boydii serotype 4 (strain Sb227)</name>
    <dbReference type="NCBI Taxonomy" id="300268"/>
    <lineage>
        <taxon>Bacteria</taxon>
        <taxon>Pseudomonadati</taxon>
        <taxon>Pseudomonadota</taxon>
        <taxon>Gammaproteobacteria</taxon>
        <taxon>Enterobacterales</taxon>
        <taxon>Enterobacteriaceae</taxon>
        <taxon>Shigella</taxon>
    </lineage>
</organism>
<name>FABZ_SHIBS</name>
<comment type="function">
    <text evidence="1">Involved in unsaturated fatty acids biosynthesis. Catalyzes the dehydration of short chain beta-hydroxyacyl-ACPs and long chain saturated and unsaturated beta-hydroxyacyl-ACPs.</text>
</comment>
<comment type="catalytic activity">
    <reaction evidence="1">
        <text>a (3R)-hydroxyacyl-[ACP] = a (2E)-enoyl-[ACP] + H2O</text>
        <dbReference type="Rhea" id="RHEA:13097"/>
        <dbReference type="Rhea" id="RHEA-COMP:9925"/>
        <dbReference type="Rhea" id="RHEA-COMP:9945"/>
        <dbReference type="ChEBI" id="CHEBI:15377"/>
        <dbReference type="ChEBI" id="CHEBI:78784"/>
        <dbReference type="ChEBI" id="CHEBI:78827"/>
        <dbReference type="EC" id="4.2.1.59"/>
    </reaction>
</comment>
<comment type="subunit">
    <text evidence="1">Oligomer.</text>
</comment>
<comment type="subcellular location">
    <subcellularLocation>
        <location evidence="1">Cytoplasm</location>
    </subcellularLocation>
</comment>
<comment type="PTM">
    <text evidence="1">The N-terminus is blocked.</text>
</comment>
<comment type="similarity">
    <text evidence="1">Belongs to the thioester dehydratase family. FabZ subfamily.</text>
</comment>
<proteinExistence type="inferred from homology"/>
<feature type="chain" id="PRO_0000230835" description="3-hydroxyacyl-[acyl-carrier-protein] dehydratase FabZ">
    <location>
        <begin position="1"/>
        <end position="151"/>
    </location>
</feature>
<feature type="active site" evidence="1">
    <location>
        <position position="54"/>
    </location>
</feature>
<reference key="1">
    <citation type="journal article" date="2005" name="Nucleic Acids Res.">
        <title>Genome dynamics and diversity of Shigella species, the etiologic agents of bacillary dysentery.</title>
        <authorList>
            <person name="Yang F."/>
            <person name="Yang J."/>
            <person name="Zhang X."/>
            <person name="Chen L."/>
            <person name="Jiang Y."/>
            <person name="Yan Y."/>
            <person name="Tang X."/>
            <person name="Wang J."/>
            <person name="Xiong Z."/>
            <person name="Dong J."/>
            <person name="Xue Y."/>
            <person name="Zhu Y."/>
            <person name="Xu X."/>
            <person name="Sun L."/>
            <person name="Chen S."/>
            <person name="Nie H."/>
            <person name="Peng J."/>
            <person name="Xu J."/>
            <person name="Wang Y."/>
            <person name="Yuan Z."/>
            <person name="Wen Y."/>
            <person name="Yao Z."/>
            <person name="Shen Y."/>
            <person name="Qiang B."/>
            <person name="Hou Y."/>
            <person name="Yu J."/>
            <person name="Jin Q."/>
        </authorList>
    </citation>
    <scope>NUCLEOTIDE SEQUENCE [LARGE SCALE GENOMIC DNA]</scope>
    <source>
        <strain>Sb227</strain>
    </source>
</reference>
<gene>
    <name evidence="1" type="primary">fabZ</name>
    <name type="ordered locus">SBO_0168</name>
</gene>
<sequence>MTTNTHTLQIEEILELLPHRFPFLLVDRVLDFEEGRFLRAVKNVSVNEPFFQGHFPGKPIFPGVLILEAMAQATGILAFKSVGKLEPGELYYFAGIDEARFKRPVVPGDQMIMEVTFEKTRRGLTRFKGVALVDGKVVCEATMMCARSREA</sequence>
<dbReference type="EC" id="4.2.1.59" evidence="1"/>
<dbReference type="EMBL" id="CP000036">
    <property type="protein sequence ID" value="ABB64898.1"/>
    <property type="molecule type" value="Genomic_DNA"/>
</dbReference>
<dbReference type="RefSeq" id="WP_000210739.1">
    <property type="nucleotide sequence ID" value="NC_007613.1"/>
</dbReference>
<dbReference type="SMR" id="Q325W0"/>
<dbReference type="GeneID" id="93777245"/>
<dbReference type="KEGG" id="sbo:SBO_0168"/>
<dbReference type="HOGENOM" id="CLU_078912_1_0_6"/>
<dbReference type="Proteomes" id="UP000007067">
    <property type="component" value="Chromosome"/>
</dbReference>
<dbReference type="GO" id="GO:0005737">
    <property type="term" value="C:cytoplasm"/>
    <property type="evidence" value="ECO:0007669"/>
    <property type="project" value="UniProtKB-SubCell"/>
</dbReference>
<dbReference type="GO" id="GO:0016020">
    <property type="term" value="C:membrane"/>
    <property type="evidence" value="ECO:0007669"/>
    <property type="project" value="GOC"/>
</dbReference>
<dbReference type="GO" id="GO:0019171">
    <property type="term" value="F:(3R)-hydroxyacyl-[acyl-carrier-protein] dehydratase activity"/>
    <property type="evidence" value="ECO:0007669"/>
    <property type="project" value="UniProtKB-EC"/>
</dbReference>
<dbReference type="GO" id="GO:0006633">
    <property type="term" value="P:fatty acid biosynthetic process"/>
    <property type="evidence" value="ECO:0007669"/>
    <property type="project" value="UniProtKB-UniRule"/>
</dbReference>
<dbReference type="GO" id="GO:0009245">
    <property type="term" value="P:lipid A biosynthetic process"/>
    <property type="evidence" value="ECO:0007669"/>
    <property type="project" value="UniProtKB-UniRule"/>
</dbReference>
<dbReference type="CDD" id="cd01288">
    <property type="entry name" value="FabZ"/>
    <property type="match status" value="1"/>
</dbReference>
<dbReference type="FunFam" id="3.10.129.10:FF:000001">
    <property type="entry name" value="3-hydroxyacyl-[acyl-carrier-protein] dehydratase FabZ"/>
    <property type="match status" value="1"/>
</dbReference>
<dbReference type="Gene3D" id="3.10.129.10">
    <property type="entry name" value="Hotdog Thioesterase"/>
    <property type="match status" value="1"/>
</dbReference>
<dbReference type="HAMAP" id="MF_00406">
    <property type="entry name" value="FabZ"/>
    <property type="match status" value="1"/>
</dbReference>
<dbReference type="InterPro" id="IPR013114">
    <property type="entry name" value="FabA_FabZ"/>
</dbReference>
<dbReference type="InterPro" id="IPR010084">
    <property type="entry name" value="FabZ"/>
</dbReference>
<dbReference type="InterPro" id="IPR029069">
    <property type="entry name" value="HotDog_dom_sf"/>
</dbReference>
<dbReference type="NCBIfam" id="TIGR01750">
    <property type="entry name" value="fabZ"/>
    <property type="match status" value="1"/>
</dbReference>
<dbReference type="NCBIfam" id="NF000582">
    <property type="entry name" value="PRK00006.1"/>
    <property type="match status" value="1"/>
</dbReference>
<dbReference type="PANTHER" id="PTHR30272">
    <property type="entry name" value="3-HYDROXYACYL-[ACYL-CARRIER-PROTEIN] DEHYDRATASE"/>
    <property type="match status" value="1"/>
</dbReference>
<dbReference type="PANTHER" id="PTHR30272:SF1">
    <property type="entry name" value="3-HYDROXYACYL-[ACYL-CARRIER-PROTEIN] DEHYDRATASE"/>
    <property type="match status" value="1"/>
</dbReference>
<dbReference type="Pfam" id="PF07977">
    <property type="entry name" value="FabA"/>
    <property type="match status" value="1"/>
</dbReference>
<dbReference type="SUPFAM" id="SSF54637">
    <property type="entry name" value="Thioesterase/thiol ester dehydrase-isomerase"/>
    <property type="match status" value="1"/>
</dbReference>
<protein>
    <recommendedName>
        <fullName evidence="1">3-hydroxyacyl-[acyl-carrier-protein] dehydratase FabZ</fullName>
        <ecNumber evidence="1">4.2.1.59</ecNumber>
    </recommendedName>
    <alternativeName>
        <fullName evidence="1">(3R)-hydroxymyristoyl-[acyl-carrier-protein] dehydratase</fullName>
        <shortName evidence="1">(3R)-hydroxymyristoyl-ACP dehydrase</shortName>
    </alternativeName>
    <alternativeName>
        <fullName evidence="1">Beta-hydroxyacyl-ACP dehydratase</fullName>
    </alternativeName>
</protein>
<evidence type="ECO:0000255" key="1">
    <source>
        <dbReference type="HAMAP-Rule" id="MF_00406"/>
    </source>
</evidence>
<keyword id="KW-0963">Cytoplasm</keyword>
<keyword id="KW-0441">Lipid A biosynthesis</keyword>
<keyword id="KW-0444">Lipid biosynthesis</keyword>
<keyword id="KW-0443">Lipid metabolism</keyword>
<keyword id="KW-0456">Lyase</keyword>
<accession>Q325W0</accession>